<comment type="subunit">
    <text evidence="1">Part of the 30S ribosomal subunit.</text>
</comment>
<comment type="subcellular location">
    <subcellularLocation>
        <location>Plastid</location>
        <location>Chloroplast</location>
    </subcellularLocation>
</comment>
<comment type="similarity">
    <text evidence="2">Belongs to the universal ribosomal protein uS3 family.</text>
</comment>
<accession>Q2VEE2</accession>
<feature type="chain" id="PRO_0000230759" description="Small ribosomal subunit protein uS3c">
    <location>
        <begin position="1"/>
        <end position="218"/>
    </location>
</feature>
<feature type="domain" description="KH type-2">
    <location>
        <begin position="47"/>
        <end position="118"/>
    </location>
</feature>
<name>RR3_SOLTU</name>
<proteinExistence type="inferred from homology"/>
<organism>
    <name type="scientific">Solanum tuberosum</name>
    <name type="common">Potato</name>
    <dbReference type="NCBI Taxonomy" id="4113"/>
    <lineage>
        <taxon>Eukaryota</taxon>
        <taxon>Viridiplantae</taxon>
        <taxon>Streptophyta</taxon>
        <taxon>Embryophyta</taxon>
        <taxon>Tracheophyta</taxon>
        <taxon>Spermatophyta</taxon>
        <taxon>Magnoliopsida</taxon>
        <taxon>eudicotyledons</taxon>
        <taxon>Gunneridae</taxon>
        <taxon>Pentapetalae</taxon>
        <taxon>asterids</taxon>
        <taxon>lamiids</taxon>
        <taxon>Solanales</taxon>
        <taxon>Solanaceae</taxon>
        <taxon>Solanoideae</taxon>
        <taxon>Solaneae</taxon>
        <taxon>Solanum</taxon>
    </lineage>
</organism>
<gene>
    <name type="primary">rps3</name>
</gene>
<keyword id="KW-0150">Chloroplast</keyword>
<keyword id="KW-0934">Plastid</keyword>
<keyword id="KW-1185">Reference proteome</keyword>
<keyword id="KW-0687">Ribonucleoprotein</keyword>
<keyword id="KW-0689">Ribosomal protein</keyword>
<keyword id="KW-0694">RNA-binding</keyword>
<keyword id="KW-0699">rRNA-binding</keyword>
<protein>
    <recommendedName>
        <fullName evidence="2">Small ribosomal subunit protein uS3c</fullName>
    </recommendedName>
    <alternativeName>
        <fullName>30S ribosomal protein S3, chloroplastic</fullName>
    </alternativeName>
</protein>
<dbReference type="EMBL" id="DQ231562">
    <property type="protein sequence ID" value="ABB90076.1"/>
    <property type="molecule type" value="Genomic_DNA"/>
</dbReference>
<dbReference type="EMBL" id="DQ386163">
    <property type="protein sequence ID" value="ABD47094.1"/>
    <property type="molecule type" value="Genomic_DNA"/>
</dbReference>
<dbReference type="RefSeq" id="YP_635677.1">
    <property type="nucleotide sequence ID" value="NC_008096.2"/>
</dbReference>
<dbReference type="SMR" id="Q2VEE2"/>
<dbReference type="FunCoup" id="Q2VEE2">
    <property type="interactions" value="309"/>
</dbReference>
<dbReference type="STRING" id="4113.Q2VEE2"/>
<dbReference type="PaxDb" id="4113-PGSC0003DMT400008977"/>
<dbReference type="GeneID" id="4099882"/>
<dbReference type="KEGG" id="sot:4099882"/>
<dbReference type="InParanoid" id="Q2VEE2"/>
<dbReference type="OrthoDB" id="1842609at2759"/>
<dbReference type="Proteomes" id="UP000011115">
    <property type="component" value="Unassembled WGS sequence"/>
</dbReference>
<dbReference type="ExpressionAtlas" id="Q2VEE2">
    <property type="expression patterns" value="baseline"/>
</dbReference>
<dbReference type="GO" id="GO:0009507">
    <property type="term" value="C:chloroplast"/>
    <property type="evidence" value="ECO:0007669"/>
    <property type="project" value="UniProtKB-SubCell"/>
</dbReference>
<dbReference type="GO" id="GO:0022627">
    <property type="term" value="C:cytosolic small ribosomal subunit"/>
    <property type="evidence" value="ECO:0000318"/>
    <property type="project" value="GO_Central"/>
</dbReference>
<dbReference type="GO" id="GO:0019843">
    <property type="term" value="F:rRNA binding"/>
    <property type="evidence" value="ECO:0007669"/>
    <property type="project" value="UniProtKB-UniRule"/>
</dbReference>
<dbReference type="GO" id="GO:0003735">
    <property type="term" value="F:structural constituent of ribosome"/>
    <property type="evidence" value="ECO:0000318"/>
    <property type="project" value="GO_Central"/>
</dbReference>
<dbReference type="GO" id="GO:0006412">
    <property type="term" value="P:translation"/>
    <property type="evidence" value="ECO:0007669"/>
    <property type="project" value="UniProtKB-UniRule"/>
</dbReference>
<dbReference type="CDD" id="cd02412">
    <property type="entry name" value="KH-II_30S_S3"/>
    <property type="match status" value="1"/>
</dbReference>
<dbReference type="FunFam" id="3.30.1140.32:FF:000003">
    <property type="entry name" value="30S ribosomal protein S3, chloroplastic"/>
    <property type="match status" value="1"/>
</dbReference>
<dbReference type="FunFam" id="3.30.300.20:FF:000008">
    <property type="entry name" value="30S ribosomal protein S3, chloroplastic"/>
    <property type="match status" value="1"/>
</dbReference>
<dbReference type="Gene3D" id="3.30.300.20">
    <property type="match status" value="1"/>
</dbReference>
<dbReference type="Gene3D" id="3.30.1140.32">
    <property type="entry name" value="Ribosomal protein S3, C-terminal domain"/>
    <property type="match status" value="1"/>
</dbReference>
<dbReference type="HAMAP" id="MF_01309_B">
    <property type="entry name" value="Ribosomal_uS3_B"/>
    <property type="match status" value="1"/>
</dbReference>
<dbReference type="InterPro" id="IPR015946">
    <property type="entry name" value="KH_dom-like_a/b"/>
</dbReference>
<dbReference type="InterPro" id="IPR004044">
    <property type="entry name" value="KH_dom_type_2"/>
</dbReference>
<dbReference type="InterPro" id="IPR009019">
    <property type="entry name" value="KH_sf_prok-type"/>
</dbReference>
<dbReference type="InterPro" id="IPR036419">
    <property type="entry name" value="Ribosomal_S3_C_sf"/>
</dbReference>
<dbReference type="InterPro" id="IPR005704">
    <property type="entry name" value="Ribosomal_uS3_bac-typ"/>
</dbReference>
<dbReference type="InterPro" id="IPR001351">
    <property type="entry name" value="Ribosomal_uS3_C"/>
</dbReference>
<dbReference type="InterPro" id="IPR018280">
    <property type="entry name" value="Ribosomal_uS3_CS"/>
</dbReference>
<dbReference type="NCBIfam" id="TIGR01009">
    <property type="entry name" value="rpsC_bact"/>
    <property type="match status" value="1"/>
</dbReference>
<dbReference type="PANTHER" id="PTHR11760">
    <property type="entry name" value="30S/40S RIBOSOMAL PROTEIN S3"/>
    <property type="match status" value="1"/>
</dbReference>
<dbReference type="PANTHER" id="PTHR11760:SF19">
    <property type="entry name" value="SMALL RIBOSOMAL SUBUNIT PROTEIN US3C"/>
    <property type="match status" value="1"/>
</dbReference>
<dbReference type="Pfam" id="PF00189">
    <property type="entry name" value="Ribosomal_S3_C"/>
    <property type="match status" value="1"/>
</dbReference>
<dbReference type="SUPFAM" id="SSF54814">
    <property type="entry name" value="Prokaryotic type KH domain (KH-domain type II)"/>
    <property type="match status" value="1"/>
</dbReference>
<dbReference type="SUPFAM" id="SSF54821">
    <property type="entry name" value="Ribosomal protein S3 C-terminal domain"/>
    <property type="match status" value="1"/>
</dbReference>
<dbReference type="PROSITE" id="PS50823">
    <property type="entry name" value="KH_TYPE_2"/>
    <property type="match status" value="1"/>
</dbReference>
<dbReference type="PROSITE" id="PS00548">
    <property type="entry name" value="RIBOSOMAL_S3"/>
    <property type="match status" value="1"/>
</dbReference>
<geneLocation type="chloroplast"/>
<reference key="1">
    <citation type="journal article" date="2006" name="Plant Cell Rep.">
        <title>The complete chloroplast genome sequences of Solanum tuberosum and comparative analysis with Solanaceae species identified the presence of a 241-bp deletion in cultivated potato chloroplast DNA sequence.</title>
        <authorList>
            <person name="Chung H.-J."/>
            <person name="Jung J.D."/>
            <person name="Park H.-W."/>
            <person name="Kim J.-H."/>
            <person name="Cha H.W."/>
            <person name="Min S.R."/>
            <person name="Jeong W.-J."/>
            <person name="Liu J.R."/>
        </authorList>
    </citation>
    <scope>NUCLEOTIDE SEQUENCE [LARGE SCALE GENOMIC DNA]</scope>
    <source>
        <strain>cv. Desiree</strain>
    </source>
</reference>
<reference key="2">
    <citation type="submission" date="2006-02" db="EMBL/GenBank/DDBJ databases">
        <title>Complete chloroplast genome sequences of Solanum tuberosum cultivar Desiree and comparative analyses with other Solanaceae genomes.</title>
        <authorList>
            <person name="Gargano D."/>
            <person name="Scotti N."/>
            <person name="Vezzi A."/>
            <person name="Bilardi A."/>
            <person name="Valle G."/>
            <person name="Grillo S."/>
            <person name="Cardi T."/>
        </authorList>
    </citation>
    <scope>NUCLEOTIDE SEQUENCE [LARGE SCALE GENOMIC DNA]</scope>
    <source>
        <strain>cv. Desiree</strain>
    </source>
</reference>
<sequence length="218" mass="25120">MGQKINPLGFRLGTTQGHHSLWFSQPKNYSEGLQEDKKIRDCIKNYVQKNMRTSSGIEGIARIEIQKRIDLIQVIIFMGFPKLLIESRPRGIEELQMTLQKEFNCVNRKLNIAVTRIAKPYGNPNILAEFIAGQLKNRVSFRKAMKKAIELTEQADTKGIQIQIAGRIDGKEIARVEWIREGRVPLQTIRAKIDYCSYTVRTIYGILGIKIWIFLDEE</sequence>
<evidence type="ECO:0000250" key="1"/>
<evidence type="ECO:0000305" key="2"/>